<proteinExistence type="inferred from homology"/>
<sequence>MRLRNKPWAKDKIAAYPQYVIPDPEARRGRWHELFGNDRPIHIEIGTGKGKFITEMAKLHPDVNFIGIELYPSVLVSALDKLIESELPNVRLLNANAKDLTSFFADGEIARIYLNFSDPWPKKRHEKRRLTYRDFLALYDRILSADGDIHLKTDNQSFFEYSLVSLSQYGFVLAAVQLDLHRSDIVGNVMTEYEEKFSAKGNRIYRCEALRPPQQS</sequence>
<gene>
    <name evidence="2" type="primary">trmB</name>
    <name type="ordered locus">GTNG_2728</name>
</gene>
<dbReference type="EC" id="2.1.1.33" evidence="2"/>
<dbReference type="EMBL" id="CP000557">
    <property type="protein sequence ID" value="ABO68073.1"/>
    <property type="molecule type" value="Genomic_DNA"/>
</dbReference>
<dbReference type="RefSeq" id="WP_008880928.1">
    <property type="nucleotide sequence ID" value="NC_009328.1"/>
</dbReference>
<dbReference type="SMR" id="A4IRW9"/>
<dbReference type="KEGG" id="gtn:GTNG_2728"/>
<dbReference type="eggNOG" id="COG0220">
    <property type="taxonomic scope" value="Bacteria"/>
</dbReference>
<dbReference type="HOGENOM" id="CLU_050910_2_1_9"/>
<dbReference type="UniPathway" id="UPA00989"/>
<dbReference type="Proteomes" id="UP000001578">
    <property type="component" value="Chromosome"/>
</dbReference>
<dbReference type="GO" id="GO:0043527">
    <property type="term" value="C:tRNA methyltransferase complex"/>
    <property type="evidence" value="ECO:0007669"/>
    <property type="project" value="TreeGrafter"/>
</dbReference>
<dbReference type="GO" id="GO:0008176">
    <property type="term" value="F:tRNA (guanine(46)-N7)-methyltransferase activity"/>
    <property type="evidence" value="ECO:0007669"/>
    <property type="project" value="UniProtKB-UniRule"/>
</dbReference>
<dbReference type="CDD" id="cd02440">
    <property type="entry name" value="AdoMet_MTases"/>
    <property type="match status" value="1"/>
</dbReference>
<dbReference type="FunFam" id="3.40.50.150:FF:000035">
    <property type="entry name" value="tRNA (guanine-N(7)-)-methyltransferase"/>
    <property type="match status" value="1"/>
</dbReference>
<dbReference type="Gene3D" id="3.40.50.150">
    <property type="entry name" value="Vaccinia Virus protein VP39"/>
    <property type="match status" value="1"/>
</dbReference>
<dbReference type="HAMAP" id="MF_01057">
    <property type="entry name" value="tRNA_methyltr_TrmB"/>
    <property type="match status" value="1"/>
</dbReference>
<dbReference type="InterPro" id="IPR029063">
    <property type="entry name" value="SAM-dependent_MTases_sf"/>
</dbReference>
<dbReference type="InterPro" id="IPR003358">
    <property type="entry name" value="tRNA_(Gua-N-7)_MeTrfase_Trmb"/>
</dbReference>
<dbReference type="InterPro" id="IPR055361">
    <property type="entry name" value="tRNA_methyltr_TrmB_bact"/>
</dbReference>
<dbReference type="NCBIfam" id="NF001080">
    <property type="entry name" value="PRK00121.2-2"/>
    <property type="match status" value="1"/>
</dbReference>
<dbReference type="NCBIfam" id="TIGR00091">
    <property type="entry name" value="tRNA (guanosine(46)-N7)-methyltransferase TrmB"/>
    <property type="match status" value="1"/>
</dbReference>
<dbReference type="PANTHER" id="PTHR23417">
    <property type="entry name" value="3-DEOXY-D-MANNO-OCTULOSONIC-ACID TRANSFERASE/TRNA GUANINE-N 7 - -METHYLTRANSFERASE"/>
    <property type="match status" value="1"/>
</dbReference>
<dbReference type="PANTHER" id="PTHR23417:SF14">
    <property type="entry name" value="PENTACOTRIPEPTIDE-REPEAT REGION OF PRORP DOMAIN-CONTAINING PROTEIN"/>
    <property type="match status" value="1"/>
</dbReference>
<dbReference type="Pfam" id="PF02390">
    <property type="entry name" value="Methyltransf_4"/>
    <property type="match status" value="1"/>
</dbReference>
<dbReference type="SUPFAM" id="SSF53335">
    <property type="entry name" value="S-adenosyl-L-methionine-dependent methyltransferases"/>
    <property type="match status" value="1"/>
</dbReference>
<dbReference type="PROSITE" id="PS51625">
    <property type="entry name" value="SAM_MT_TRMB"/>
    <property type="match status" value="1"/>
</dbReference>
<keyword id="KW-0489">Methyltransferase</keyword>
<keyword id="KW-0949">S-adenosyl-L-methionine</keyword>
<keyword id="KW-0808">Transferase</keyword>
<keyword id="KW-0819">tRNA processing</keyword>
<organism>
    <name type="scientific">Geobacillus thermodenitrificans (strain NG80-2)</name>
    <dbReference type="NCBI Taxonomy" id="420246"/>
    <lineage>
        <taxon>Bacteria</taxon>
        <taxon>Bacillati</taxon>
        <taxon>Bacillota</taxon>
        <taxon>Bacilli</taxon>
        <taxon>Bacillales</taxon>
        <taxon>Anoxybacillaceae</taxon>
        <taxon>Geobacillus</taxon>
    </lineage>
</organism>
<protein>
    <recommendedName>
        <fullName evidence="2">tRNA (guanine-N(7)-)-methyltransferase</fullName>
        <ecNumber evidence="2">2.1.1.33</ecNumber>
    </recommendedName>
    <alternativeName>
        <fullName evidence="2">tRNA (guanine(46)-N(7))-methyltransferase</fullName>
    </alternativeName>
    <alternativeName>
        <fullName evidence="2">tRNA(m7G46)-methyltransferase</fullName>
    </alternativeName>
</protein>
<name>TRMB_GEOTN</name>
<reference key="1">
    <citation type="journal article" date="2007" name="Proc. Natl. Acad. Sci. U.S.A.">
        <title>Genome and proteome of long-chain alkane degrading Geobacillus thermodenitrificans NG80-2 isolated from a deep-subsurface oil reservoir.</title>
        <authorList>
            <person name="Feng L."/>
            <person name="Wang W."/>
            <person name="Cheng J."/>
            <person name="Ren Y."/>
            <person name="Zhao G."/>
            <person name="Gao C."/>
            <person name="Tang Y."/>
            <person name="Liu X."/>
            <person name="Han W."/>
            <person name="Peng X."/>
            <person name="Liu R."/>
            <person name="Wang L."/>
        </authorList>
    </citation>
    <scope>NUCLEOTIDE SEQUENCE [LARGE SCALE GENOMIC DNA]</scope>
    <source>
        <strain>NG80-2</strain>
    </source>
</reference>
<comment type="function">
    <text evidence="2">Catalyzes the formation of N(7)-methylguanine at position 46 (m7G46) in tRNA.</text>
</comment>
<comment type="catalytic activity">
    <reaction evidence="2">
        <text>guanosine(46) in tRNA + S-adenosyl-L-methionine = N(7)-methylguanosine(46) in tRNA + S-adenosyl-L-homocysteine</text>
        <dbReference type="Rhea" id="RHEA:42708"/>
        <dbReference type="Rhea" id="RHEA-COMP:10188"/>
        <dbReference type="Rhea" id="RHEA-COMP:10189"/>
        <dbReference type="ChEBI" id="CHEBI:57856"/>
        <dbReference type="ChEBI" id="CHEBI:59789"/>
        <dbReference type="ChEBI" id="CHEBI:74269"/>
        <dbReference type="ChEBI" id="CHEBI:74480"/>
        <dbReference type="EC" id="2.1.1.33"/>
    </reaction>
</comment>
<comment type="pathway">
    <text evidence="2">tRNA modification; N(7)-methylguanine-tRNA biosynthesis.</text>
</comment>
<comment type="similarity">
    <text evidence="2">Belongs to the class I-like SAM-binding methyltransferase superfamily. TrmB family.</text>
</comment>
<feature type="chain" id="PRO_1000064395" description="tRNA (guanine-N(7)-)-methyltransferase">
    <location>
        <begin position="1"/>
        <end position="216"/>
    </location>
</feature>
<feature type="region of interest" description="Interaction with RNA" evidence="2">
    <location>
        <begin position="124"/>
        <end position="129"/>
    </location>
</feature>
<feature type="active site" evidence="1">
    <location>
        <position position="118"/>
    </location>
</feature>
<feature type="binding site" evidence="2">
    <location>
        <position position="44"/>
    </location>
    <ligand>
        <name>S-adenosyl-L-methionine</name>
        <dbReference type="ChEBI" id="CHEBI:59789"/>
    </ligand>
</feature>
<feature type="binding site" evidence="2">
    <location>
        <position position="69"/>
    </location>
    <ligand>
        <name>S-adenosyl-L-methionine</name>
        <dbReference type="ChEBI" id="CHEBI:59789"/>
    </ligand>
</feature>
<feature type="binding site" evidence="2">
    <location>
        <position position="96"/>
    </location>
    <ligand>
        <name>S-adenosyl-L-methionine</name>
        <dbReference type="ChEBI" id="CHEBI:59789"/>
    </ligand>
</feature>
<feature type="binding site" evidence="2">
    <location>
        <position position="118"/>
    </location>
    <ligand>
        <name>S-adenosyl-L-methionine</name>
        <dbReference type="ChEBI" id="CHEBI:59789"/>
    </ligand>
</feature>
<feature type="binding site" evidence="2">
    <location>
        <position position="122"/>
    </location>
    <ligand>
        <name>substrate</name>
    </ligand>
</feature>
<feature type="binding site" evidence="2">
    <location>
        <position position="154"/>
    </location>
    <ligand>
        <name>substrate</name>
    </ligand>
</feature>
<feature type="binding site" evidence="2">
    <location>
        <begin position="191"/>
        <end position="194"/>
    </location>
    <ligand>
        <name>substrate</name>
    </ligand>
</feature>
<accession>A4IRW9</accession>
<evidence type="ECO:0000250" key="1"/>
<evidence type="ECO:0000255" key="2">
    <source>
        <dbReference type="HAMAP-Rule" id="MF_01057"/>
    </source>
</evidence>